<dbReference type="EMBL" id="AE009952">
    <property type="protein sequence ID" value="AAM84283.1"/>
    <property type="molecule type" value="Genomic_DNA"/>
</dbReference>
<dbReference type="EMBL" id="AE017042">
    <property type="protein sequence ID" value="AAS60864.1"/>
    <property type="molecule type" value="Genomic_DNA"/>
</dbReference>
<dbReference type="EMBL" id="AL590842">
    <property type="protein sequence ID" value="CAL22077.1"/>
    <property type="molecule type" value="Genomic_DNA"/>
</dbReference>
<dbReference type="PIR" id="AB0424">
    <property type="entry name" value="AB0424"/>
</dbReference>
<dbReference type="RefSeq" id="WP_002209260.1">
    <property type="nucleotide sequence ID" value="NZ_WUCM01000023.1"/>
</dbReference>
<dbReference type="RefSeq" id="YP_002348378.1">
    <property type="nucleotide sequence ID" value="NC_003143.1"/>
</dbReference>
<dbReference type="SMR" id="Q7CKI5"/>
<dbReference type="IntAct" id="Q7CKI5">
    <property type="interactions" value="2"/>
</dbReference>
<dbReference type="MINT" id="Q7CKI5"/>
<dbReference type="STRING" id="214092.YPO3489"/>
<dbReference type="PaxDb" id="214092-YPO3489"/>
<dbReference type="DNASU" id="1145642"/>
<dbReference type="EnsemblBacteria" id="AAS60864">
    <property type="protein sequence ID" value="AAS60864"/>
    <property type="gene ID" value="YP_0594"/>
</dbReference>
<dbReference type="GeneID" id="57975225"/>
<dbReference type="KEGG" id="ype:YPO3489"/>
<dbReference type="KEGG" id="ypk:y0695"/>
<dbReference type="KEGG" id="ypm:YP_0594"/>
<dbReference type="PATRIC" id="fig|1028802.3.peg.129"/>
<dbReference type="eggNOG" id="COG4785">
    <property type="taxonomic scope" value="Bacteria"/>
</dbReference>
<dbReference type="HOGENOM" id="CLU_071600_0_0_6"/>
<dbReference type="OMA" id="YVEHRYS"/>
<dbReference type="OrthoDB" id="509324at2"/>
<dbReference type="Proteomes" id="UP000000815">
    <property type="component" value="Chromosome"/>
</dbReference>
<dbReference type="Proteomes" id="UP000001019">
    <property type="component" value="Chromosome"/>
</dbReference>
<dbReference type="Proteomes" id="UP000002490">
    <property type="component" value="Chromosome"/>
</dbReference>
<dbReference type="GO" id="GO:0005886">
    <property type="term" value="C:plasma membrane"/>
    <property type="evidence" value="ECO:0007669"/>
    <property type="project" value="UniProtKB-SubCell"/>
</dbReference>
<dbReference type="GO" id="GO:0051301">
    <property type="term" value="P:cell division"/>
    <property type="evidence" value="ECO:0007669"/>
    <property type="project" value="UniProtKB-KW"/>
</dbReference>
<dbReference type="Gene3D" id="1.25.40.10">
    <property type="entry name" value="Tetratricopeptide repeat domain"/>
    <property type="match status" value="1"/>
</dbReference>
<dbReference type="InterPro" id="IPR023605">
    <property type="entry name" value="Lipoprotein_NlpI"/>
</dbReference>
<dbReference type="InterPro" id="IPR011990">
    <property type="entry name" value="TPR-like_helical_dom_sf"/>
</dbReference>
<dbReference type="InterPro" id="IPR019734">
    <property type="entry name" value="TPR_rpt"/>
</dbReference>
<dbReference type="InterPro" id="IPR050498">
    <property type="entry name" value="Ycf3"/>
</dbReference>
<dbReference type="NCBIfam" id="NF008391">
    <property type="entry name" value="PRK11189.1"/>
    <property type="match status" value="1"/>
</dbReference>
<dbReference type="PANTHER" id="PTHR44858">
    <property type="entry name" value="TETRATRICOPEPTIDE REPEAT PROTEIN 6"/>
    <property type="match status" value="1"/>
</dbReference>
<dbReference type="PANTHER" id="PTHR44858:SF1">
    <property type="entry name" value="UDP-N-ACETYLGLUCOSAMINE--PEPTIDE N-ACETYLGLUCOSAMINYLTRANSFERASE SPINDLY-RELATED"/>
    <property type="match status" value="1"/>
</dbReference>
<dbReference type="Pfam" id="PF13432">
    <property type="entry name" value="TPR_16"/>
    <property type="match status" value="1"/>
</dbReference>
<dbReference type="Pfam" id="PF13181">
    <property type="entry name" value="TPR_8"/>
    <property type="match status" value="1"/>
</dbReference>
<dbReference type="PIRSF" id="PIRSF004654">
    <property type="entry name" value="NlpI"/>
    <property type="match status" value="1"/>
</dbReference>
<dbReference type="SMART" id="SM00028">
    <property type="entry name" value="TPR"/>
    <property type="match status" value="2"/>
</dbReference>
<dbReference type="SUPFAM" id="SSF48452">
    <property type="entry name" value="TPR-like"/>
    <property type="match status" value="1"/>
</dbReference>
<dbReference type="PROSITE" id="PS51257">
    <property type="entry name" value="PROKAR_LIPOPROTEIN"/>
    <property type="match status" value="1"/>
</dbReference>
<dbReference type="PROSITE" id="PS50005">
    <property type="entry name" value="TPR"/>
    <property type="match status" value="4"/>
</dbReference>
<dbReference type="PROSITE" id="PS50293">
    <property type="entry name" value="TPR_REGION"/>
    <property type="match status" value="1"/>
</dbReference>
<comment type="function">
    <text evidence="1">May be involved in cell division. May play a role in bacterial septation or regulation of cell wall degradation during cell division (By similarity).</text>
</comment>
<comment type="subunit">
    <text evidence="1">Homodimer.</text>
</comment>
<comment type="subcellular location">
    <subcellularLocation>
        <location evidence="2">Cell membrane</location>
        <topology evidence="2">Lipid-anchor</topology>
    </subcellularLocation>
</comment>
<feature type="signal peptide" evidence="2">
    <location>
        <begin position="1"/>
        <end position="18"/>
    </location>
</feature>
<feature type="chain" id="PRO_0000413484" description="Lipoprotein NlpI">
    <location>
        <begin position="19"/>
        <end position="294"/>
    </location>
</feature>
<feature type="repeat" description="TPR 1">
    <location>
        <begin position="62"/>
        <end position="95"/>
    </location>
</feature>
<feature type="repeat" description="TPR 2">
    <location>
        <begin position="96"/>
        <end position="129"/>
    </location>
</feature>
<feature type="repeat" description="TPR 3">
    <location>
        <begin position="234"/>
        <end position="267"/>
    </location>
</feature>
<feature type="lipid moiety-binding region" description="N-palmitoyl cysteine" evidence="2">
    <location>
        <position position="19"/>
    </location>
</feature>
<feature type="lipid moiety-binding region" description="S-diacylglycerol cysteine" evidence="2">
    <location>
        <position position="19"/>
    </location>
</feature>
<reference key="1">
    <citation type="journal article" date="2002" name="J. Bacteriol.">
        <title>Genome sequence of Yersinia pestis KIM.</title>
        <authorList>
            <person name="Deng W."/>
            <person name="Burland V."/>
            <person name="Plunkett G. III"/>
            <person name="Boutin A."/>
            <person name="Mayhew G.F."/>
            <person name="Liss P."/>
            <person name="Perna N.T."/>
            <person name="Rose D.J."/>
            <person name="Mau B."/>
            <person name="Zhou S."/>
            <person name="Schwartz D.C."/>
            <person name="Fetherston J.D."/>
            <person name="Lindler L.E."/>
            <person name="Brubaker R.R."/>
            <person name="Plano G.V."/>
            <person name="Straley S.C."/>
            <person name="McDonough K.A."/>
            <person name="Nilles M.L."/>
            <person name="Matson J.S."/>
            <person name="Blattner F.R."/>
            <person name="Perry R.D."/>
        </authorList>
    </citation>
    <scope>NUCLEOTIDE SEQUENCE [LARGE SCALE GENOMIC DNA]</scope>
    <source>
        <strain>KIM10+ / Biovar Mediaevalis</strain>
    </source>
</reference>
<reference key="2">
    <citation type="journal article" date="2001" name="Nature">
        <title>Genome sequence of Yersinia pestis, the causative agent of plague.</title>
        <authorList>
            <person name="Parkhill J."/>
            <person name="Wren B.W."/>
            <person name="Thomson N.R."/>
            <person name="Titball R.W."/>
            <person name="Holden M.T.G."/>
            <person name="Prentice M.B."/>
            <person name="Sebaihia M."/>
            <person name="James K.D."/>
            <person name="Churcher C.M."/>
            <person name="Mungall K.L."/>
            <person name="Baker S."/>
            <person name="Basham D."/>
            <person name="Bentley S.D."/>
            <person name="Brooks K."/>
            <person name="Cerdeno-Tarraga A.-M."/>
            <person name="Chillingworth T."/>
            <person name="Cronin A."/>
            <person name="Davies R.M."/>
            <person name="Davis P."/>
            <person name="Dougan G."/>
            <person name="Feltwell T."/>
            <person name="Hamlin N."/>
            <person name="Holroyd S."/>
            <person name="Jagels K."/>
            <person name="Karlyshev A.V."/>
            <person name="Leather S."/>
            <person name="Moule S."/>
            <person name="Oyston P.C.F."/>
            <person name="Quail M.A."/>
            <person name="Rutherford K.M."/>
            <person name="Simmonds M."/>
            <person name="Skelton J."/>
            <person name="Stevens K."/>
            <person name="Whitehead S."/>
            <person name="Barrell B.G."/>
        </authorList>
    </citation>
    <scope>NUCLEOTIDE SEQUENCE [LARGE SCALE GENOMIC DNA]</scope>
    <source>
        <strain>CO-92 / Biovar Orientalis</strain>
    </source>
</reference>
<reference key="3">
    <citation type="journal article" date="2004" name="DNA Res.">
        <title>Complete genome sequence of Yersinia pestis strain 91001, an isolate avirulent to humans.</title>
        <authorList>
            <person name="Song Y."/>
            <person name="Tong Z."/>
            <person name="Wang J."/>
            <person name="Wang L."/>
            <person name="Guo Z."/>
            <person name="Han Y."/>
            <person name="Zhang J."/>
            <person name="Pei D."/>
            <person name="Zhou D."/>
            <person name="Qin H."/>
            <person name="Pang X."/>
            <person name="Han Y."/>
            <person name="Zhai J."/>
            <person name="Li M."/>
            <person name="Cui B."/>
            <person name="Qi Z."/>
            <person name="Jin L."/>
            <person name="Dai R."/>
            <person name="Chen F."/>
            <person name="Li S."/>
            <person name="Ye C."/>
            <person name="Du Z."/>
            <person name="Lin W."/>
            <person name="Wang J."/>
            <person name="Yu J."/>
            <person name="Yang H."/>
            <person name="Wang J."/>
            <person name="Huang P."/>
            <person name="Yang R."/>
        </authorList>
    </citation>
    <scope>NUCLEOTIDE SEQUENCE [LARGE SCALE GENOMIC DNA]</scope>
    <source>
        <strain>91001 / Biovar Mediaevalis</strain>
    </source>
</reference>
<sequence>MKPFLRWCYVATALMLAGCSNHDWRKDEVLAIPLQPTLQQEVILARMEQILASRALTDDERAQLLYERGVLYDSLGLRALARNDFSQALAIRPDMPEVFNYLGIYLTQAGNFDAAYEAFDSVLELDPTYNYARLNRGIALYYGGRFPLAQDDLQAFYQDDPNDPFRSLWLYLVEREIDPKAAVVALQQRYEKSDRGQWGWNIVEFYLGKISEKSLMERLKADATDNTSLAEHLSETDFYLGKHYLSLGDKNTASVLFKLTVANNVHNFVEHRYALLELALLGQEQDDLSESDQQ</sequence>
<organism>
    <name type="scientific">Yersinia pestis</name>
    <dbReference type="NCBI Taxonomy" id="632"/>
    <lineage>
        <taxon>Bacteria</taxon>
        <taxon>Pseudomonadati</taxon>
        <taxon>Pseudomonadota</taxon>
        <taxon>Gammaproteobacteria</taxon>
        <taxon>Enterobacterales</taxon>
        <taxon>Yersiniaceae</taxon>
        <taxon>Yersinia</taxon>
    </lineage>
</organism>
<name>NLPI_YERPE</name>
<protein>
    <recommendedName>
        <fullName>Lipoprotein NlpI</fullName>
    </recommendedName>
</protein>
<evidence type="ECO:0000250" key="1"/>
<evidence type="ECO:0000255" key="2">
    <source>
        <dbReference type="PROSITE-ProRule" id="PRU00303"/>
    </source>
</evidence>
<keyword id="KW-0131">Cell cycle</keyword>
<keyword id="KW-0132">Cell division</keyword>
<keyword id="KW-1003">Cell membrane</keyword>
<keyword id="KW-0449">Lipoprotein</keyword>
<keyword id="KW-0472">Membrane</keyword>
<keyword id="KW-0564">Palmitate</keyword>
<keyword id="KW-1185">Reference proteome</keyword>
<keyword id="KW-0677">Repeat</keyword>
<keyword id="KW-0732">Signal</keyword>
<keyword id="KW-0802">TPR repeat</keyword>
<gene>
    <name type="primary">nlpI</name>
    <name type="ordered locus">YPO3489</name>
    <name type="ordered locus">YP_0594</name>
    <name type="ordered locus">y0695</name>
</gene>
<proteinExistence type="inferred from homology"/>
<accession>Q7CKI5</accession>
<accession>Q74X65</accession>